<proteinExistence type="inferred from homology"/>
<comment type="function">
    <text evidence="1">With EpmB is involved in the beta-lysylation step of the post-translational modification of translation elongation factor P (EF-P). Catalyzes the ATP-dependent activation of (R)-beta-lysine produced by EpmB, forming a lysyl-adenylate, from which the beta-lysyl moiety is then transferred to the epsilon-amino group of a conserved specific lysine residue in EF-P.</text>
</comment>
<comment type="catalytic activity">
    <reaction evidence="1">
        <text>D-beta-lysine + L-lysyl-[protein] + ATP = N(6)-((3R)-3,6-diaminohexanoyl)-L-lysyl-[protein] + AMP + diphosphate + H(+)</text>
        <dbReference type="Rhea" id="RHEA:83435"/>
        <dbReference type="Rhea" id="RHEA-COMP:9752"/>
        <dbReference type="Rhea" id="RHEA-COMP:20131"/>
        <dbReference type="ChEBI" id="CHEBI:15378"/>
        <dbReference type="ChEBI" id="CHEBI:29969"/>
        <dbReference type="ChEBI" id="CHEBI:30616"/>
        <dbReference type="ChEBI" id="CHEBI:33019"/>
        <dbReference type="ChEBI" id="CHEBI:84138"/>
        <dbReference type="ChEBI" id="CHEBI:156053"/>
        <dbReference type="ChEBI" id="CHEBI:456215"/>
    </reaction>
    <physiologicalReaction direction="left-to-right" evidence="1">
        <dbReference type="Rhea" id="RHEA:83436"/>
    </physiologicalReaction>
</comment>
<comment type="subunit">
    <text evidence="1">Homodimer.</text>
</comment>
<comment type="similarity">
    <text evidence="1">Belongs to the class-II aminoacyl-tRNA synthetase family. EpmA subfamily.</text>
</comment>
<sequence>MSDTASWQPSAPIANLLKRAAIMAEIRRFFADRGVLEVETPTMSQATVTDIHLVPFETRFVGPGAADGLTLYMMTSPEYHMKRLLAAGSGPIYQLGRSFRNEEAGRYHNPEFTMLEWYRPHYDMYRLMNEVDDLLQQILDCNSAETLSYQQAFLRHLNIDPLSAEKAQLREVAAKLDLSNIADTEEDRDTLLQLLFTVGVEPYIGRDKPAFIYHFPASQASLAEISTEDHRVAERFEVYFKGIELANGFRELTDGDEQLQRFEQDNRNRAKRGLPQNPIDMNLIAALKQGLPDCSGVALGVDRLVMLALNAERLSDVIAFPVNIA</sequence>
<evidence type="ECO:0000255" key="1">
    <source>
        <dbReference type="HAMAP-Rule" id="MF_00174"/>
    </source>
</evidence>
<reference key="1">
    <citation type="submission" date="2008-04" db="EMBL/GenBank/DDBJ databases">
        <title>Complete sequence of Yersinia pseudotuberculosis PB1/+.</title>
        <authorList>
            <person name="Copeland A."/>
            <person name="Lucas S."/>
            <person name="Lapidus A."/>
            <person name="Glavina del Rio T."/>
            <person name="Dalin E."/>
            <person name="Tice H."/>
            <person name="Bruce D."/>
            <person name="Goodwin L."/>
            <person name="Pitluck S."/>
            <person name="Munk A.C."/>
            <person name="Brettin T."/>
            <person name="Detter J.C."/>
            <person name="Han C."/>
            <person name="Tapia R."/>
            <person name="Schmutz J."/>
            <person name="Larimer F."/>
            <person name="Land M."/>
            <person name="Hauser L."/>
            <person name="Challacombe J.F."/>
            <person name="Green L."/>
            <person name="Lindler L.E."/>
            <person name="Nikolich M.P."/>
            <person name="Richardson P."/>
        </authorList>
    </citation>
    <scope>NUCLEOTIDE SEQUENCE [LARGE SCALE GENOMIC DNA]</scope>
    <source>
        <strain>PB1/+</strain>
    </source>
</reference>
<keyword id="KW-0067">ATP-binding</keyword>
<keyword id="KW-0436">Ligase</keyword>
<keyword id="KW-0547">Nucleotide-binding</keyword>
<gene>
    <name evidence="1" type="primary">epmA</name>
    <name type="synonym">yjeA</name>
    <name type="ordered locus">YPTS_0440</name>
</gene>
<accession>B2K1Z3</accession>
<dbReference type="EC" id="6.3.2.-" evidence="1"/>
<dbReference type="EMBL" id="CP001048">
    <property type="protein sequence ID" value="ACC87428.1"/>
    <property type="molecule type" value="Genomic_DNA"/>
</dbReference>
<dbReference type="RefSeq" id="WP_002209139.1">
    <property type="nucleotide sequence ID" value="NZ_CP009780.1"/>
</dbReference>
<dbReference type="SMR" id="B2K1Z3"/>
<dbReference type="GeneID" id="57974246"/>
<dbReference type="KEGG" id="ypb:YPTS_0440"/>
<dbReference type="PATRIC" id="fig|502801.10.peg.4116"/>
<dbReference type="GO" id="GO:0005829">
    <property type="term" value="C:cytosol"/>
    <property type="evidence" value="ECO:0007669"/>
    <property type="project" value="TreeGrafter"/>
</dbReference>
<dbReference type="GO" id="GO:0016880">
    <property type="term" value="F:acid-ammonia (or amide) ligase activity"/>
    <property type="evidence" value="ECO:0007669"/>
    <property type="project" value="UniProtKB-UniRule"/>
</dbReference>
<dbReference type="GO" id="GO:0005524">
    <property type="term" value="F:ATP binding"/>
    <property type="evidence" value="ECO:0007669"/>
    <property type="project" value="UniProtKB-UniRule"/>
</dbReference>
<dbReference type="GO" id="GO:0004824">
    <property type="term" value="F:lysine-tRNA ligase activity"/>
    <property type="evidence" value="ECO:0007669"/>
    <property type="project" value="InterPro"/>
</dbReference>
<dbReference type="GO" id="GO:0000049">
    <property type="term" value="F:tRNA binding"/>
    <property type="evidence" value="ECO:0007669"/>
    <property type="project" value="TreeGrafter"/>
</dbReference>
<dbReference type="GO" id="GO:0006430">
    <property type="term" value="P:lysyl-tRNA aminoacylation"/>
    <property type="evidence" value="ECO:0007669"/>
    <property type="project" value="InterPro"/>
</dbReference>
<dbReference type="FunFam" id="3.30.930.10:FF:000017">
    <property type="entry name" value="Elongation factor P--(R)-beta-lysine ligase"/>
    <property type="match status" value="1"/>
</dbReference>
<dbReference type="Gene3D" id="3.30.930.10">
    <property type="entry name" value="Bira Bifunctional Protein, Domain 2"/>
    <property type="match status" value="1"/>
</dbReference>
<dbReference type="HAMAP" id="MF_00174">
    <property type="entry name" value="EF_P_modif_A"/>
    <property type="match status" value="1"/>
</dbReference>
<dbReference type="InterPro" id="IPR004364">
    <property type="entry name" value="Aa-tRNA-synt_II"/>
</dbReference>
<dbReference type="InterPro" id="IPR006195">
    <property type="entry name" value="aa-tRNA-synth_II"/>
</dbReference>
<dbReference type="InterPro" id="IPR045864">
    <property type="entry name" value="aa-tRNA-synth_II/BPL/LPL"/>
</dbReference>
<dbReference type="InterPro" id="IPR004525">
    <property type="entry name" value="EpmA"/>
</dbReference>
<dbReference type="InterPro" id="IPR018149">
    <property type="entry name" value="Lys-tRNA-synth_II_C"/>
</dbReference>
<dbReference type="NCBIfam" id="TIGR00462">
    <property type="entry name" value="genX"/>
    <property type="match status" value="1"/>
</dbReference>
<dbReference type="NCBIfam" id="NF006828">
    <property type="entry name" value="PRK09350.1"/>
    <property type="match status" value="1"/>
</dbReference>
<dbReference type="PANTHER" id="PTHR42918:SF6">
    <property type="entry name" value="ELONGATION FACTOR P--(R)-BETA-LYSINE LIGASE"/>
    <property type="match status" value="1"/>
</dbReference>
<dbReference type="PANTHER" id="PTHR42918">
    <property type="entry name" value="LYSYL-TRNA SYNTHETASE"/>
    <property type="match status" value="1"/>
</dbReference>
<dbReference type="Pfam" id="PF00152">
    <property type="entry name" value="tRNA-synt_2"/>
    <property type="match status" value="1"/>
</dbReference>
<dbReference type="PRINTS" id="PR00982">
    <property type="entry name" value="TRNASYNTHLYS"/>
</dbReference>
<dbReference type="SUPFAM" id="SSF55681">
    <property type="entry name" value="Class II aaRS and biotin synthetases"/>
    <property type="match status" value="1"/>
</dbReference>
<dbReference type="PROSITE" id="PS50862">
    <property type="entry name" value="AA_TRNA_LIGASE_II"/>
    <property type="match status" value="1"/>
</dbReference>
<organism>
    <name type="scientific">Yersinia pseudotuberculosis serotype IB (strain PB1/+)</name>
    <dbReference type="NCBI Taxonomy" id="502801"/>
    <lineage>
        <taxon>Bacteria</taxon>
        <taxon>Pseudomonadati</taxon>
        <taxon>Pseudomonadota</taxon>
        <taxon>Gammaproteobacteria</taxon>
        <taxon>Enterobacterales</taxon>
        <taxon>Yersiniaceae</taxon>
        <taxon>Yersinia</taxon>
    </lineage>
</organism>
<name>EPMA_YERPB</name>
<protein>
    <recommendedName>
        <fullName evidence="1">Elongation factor P--(R)-beta-lysine ligase</fullName>
        <shortName evidence="1">EF-P--(R)-beta-lysine ligase</shortName>
        <ecNumber evidence="1">6.3.2.-</ecNumber>
    </recommendedName>
    <alternativeName>
        <fullName evidence="1">EF-P post-translational modification enzyme A</fullName>
    </alternativeName>
    <alternativeName>
        <fullName evidence="1">EF-P-lysine lysyltransferase</fullName>
    </alternativeName>
</protein>
<feature type="chain" id="PRO_1000097913" description="Elongation factor P--(R)-beta-lysine ligase">
    <location>
        <begin position="1"/>
        <end position="325"/>
    </location>
</feature>
<feature type="binding site" evidence="1">
    <location>
        <begin position="76"/>
        <end position="78"/>
    </location>
    <ligand>
        <name>substrate</name>
    </ligand>
</feature>
<feature type="binding site" evidence="1">
    <location>
        <begin position="100"/>
        <end position="102"/>
    </location>
    <ligand>
        <name>ATP</name>
        <dbReference type="ChEBI" id="CHEBI:30616"/>
    </ligand>
</feature>
<feature type="binding site" evidence="1">
    <location>
        <position position="109"/>
    </location>
    <ligand>
        <name>ATP</name>
        <dbReference type="ChEBI" id="CHEBI:30616"/>
    </ligand>
</feature>
<feature type="binding site" evidence="1">
    <location>
        <position position="118"/>
    </location>
    <ligand>
        <name>substrate</name>
    </ligand>
</feature>
<feature type="binding site" evidence="1">
    <location>
        <begin position="244"/>
        <end position="245"/>
    </location>
    <ligand>
        <name>ATP</name>
        <dbReference type="ChEBI" id="CHEBI:30616"/>
    </ligand>
</feature>
<feature type="binding site" evidence="1">
    <location>
        <position position="251"/>
    </location>
    <ligand>
        <name>substrate</name>
    </ligand>
</feature>
<feature type="binding site" evidence="1">
    <location>
        <position position="300"/>
    </location>
    <ligand>
        <name>ATP</name>
        <dbReference type="ChEBI" id="CHEBI:30616"/>
    </ligand>
</feature>